<dbReference type="EMBL" id="AAHF01000015">
    <property type="protein sequence ID" value="EAL84668.1"/>
    <property type="molecule type" value="Genomic_DNA"/>
</dbReference>
<dbReference type="RefSeq" id="XP_746706.1">
    <property type="nucleotide sequence ID" value="XM_741613.1"/>
</dbReference>
<dbReference type="STRING" id="330879.Q4WAR8"/>
<dbReference type="EnsemblFungi" id="EAL84668">
    <property type="protein sequence ID" value="EAL84668"/>
    <property type="gene ID" value="AFUA_7G02260"/>
</dbReference>
<dbReference type="GeneID" id="3504272"/>
<dbReference type="KEGG" id="afm:AFUA_7G02260"/>
<dbReference type="VEuPathDB" id="FungiDB:Afu7g02260"/>
<dbReference type="eggNOG" id="ENOG502R28W">
    <property type="taxonomic scope" value="Eukaryota"/>
</dbReference>
<dbReference type="HOGENOM" id="CLU_008468_0_0_1"/>
<dbReference type="InParanoid" id="Q4WAR8"/>
<dbReference type="OMA" id="NMAPHFF"/>
<dbReference type="OrthoDB" id="5600002at2759"/>
<dbReference type="PHI-base" id="PHI:5365"/>
<dbReference type="Proteomes" id="UP000002530">
    <property type="component" value="Chromosome 7"/>
</dbReference>
<dbReference type="GO" id="GO:0005634">
    <property type="term" value="C:nucleus"/>
    <property type="evidence" value="ECO:0000318"/>
    <property type="project" value="GO_Central"/>
</dbReference>
<dbReference type="GO" id="GO:0045944">
    <property type="term" value="P:positive regulation of transcription by RNA polymerase II"/>
    <property type="evidence" value="ECO:0000318"/>
    <property type="project" value="GO_Central"/>
</dbReference>
<dbReference type="InterPro" id="IPR006594">
    <property type="entry name" value="LisH"/>
</dbReference>
<dbReference type="PANTHER" id="PTHR12610:SF12">
    <property type="entry name" value="SEQUENCE-SPECIFIC SINGLE-STRANDED DNA-BINDING PROTEIN, ISOFORM D"/>
    <property type="match status" value="1"/>
</dbReference>
<dbReference type="PANTHER" id="PTHR12610">
    <property type="entry name" value="SINGLE STRANDED DNA BINDING PROTEIN"/>
    <property type="match status" value="1"/>
</dbReference>
<dbReference type="Pfam" id="PF08513">
    <property type="entry name" value="LisH"/>
    <property type="match status" value="1"/>
</dbReference>
<dbReference type="PRINTS" id="PR01217">
    <property type="entry name" value="PRICHEXTENSN"/>
</dbReference>
<dbReference type="PROSITE" id="PS50896">
    <property type="entry name" value="LISH"/>
    <property type="match status" value="1"/>
</dbReference>
<organism>
    <name type="scientific">Aspergillus fumigatus (strain ATCC MYA-4609 / CBS 101355 / FGSC A1100 / Af293)</name>
    <name type="common">Neosartorya fumigata</name>
    <dbReference type="NCBI Taxonomy" id="330879"/>
    <lineage>
        <taxon>Eukaryota</taxon>
        <taxon>Fungi</taxon>
        <taxon>Dikarya</taxon>
        <taxon>Ascomycota</taxon>
        <taxon>Pezizomycotina</taxon>
        <taxon>Eurotiomycetes</taxon>
        <taxon>Eurotiomycetidae</taxon>
        <taxon>Eurotiales</taxon>
        <taxon>Aspergillaceae</taxon>
        <taxon>Aspergillus</taxon>
        <taxon>Aspergillus subgen. Fumigati</taxon>
    </lineage>
</organism>
<feature type="chain" id="PRO_0000435641" description="Transcriptional activator somA">
    <location>
        <begin position="1"/>
        <end position="784"/>
    </location>
</feature>
<feature type="domain" description="LisH" evidence="1">
    <location>
        <begin position="43"/>
        <end position="75"/>
    </location>
</feature>
<feature type="region of interest" description="Disordered" evidence="2">
    <location>
        <begin position="75"/>
        <end position="122"/>
    </location>
</feature>
<feature type="region of interest" description="Disordered" evidence="2">
    <location>
        <begin position="212"/>
        <end position="295"/>
    </location>
</feature>
<feature type="region of interest" description="Disordered" evidence="2">
    <location>
        <begin position="424"/>
        <end position="726"/>
    </location>
</feature>
<feature type="region of interest" description="Disordered" evidence="2">
    <location>
        <begin position="764"/>
        <end position="784"/>
    </location>
</feature>
<feature type="compositionally biased region" description="Polar residues" evidence="2">
    <location>
        <begin position="75"/>
        <end position="84"/>
    </location>
</feature>
<feature type="compositionally biased region" description="Basic and acidic residues" evidence="2">
    <location>
        <begin position="103"/>
        <end position="117"/>
    </location>
</feature>
<feature type="compositionally biased region" description="Low complexity" evidence="2">
    <location>
        <begin position="215"/>
        <end position="233"/>
    </location>
</feature>
<feature type="compositionally biased region" description="Basic and acidic residues" evidence="2">
    <location>
        <begin position="234"/>
        <end position="244"/>
    </location>
</feature>
<feature type="compositionally biased region" description="Low complexity" evidence="2">
    <location>
        <begin position="247"/>
        <end position="259"/>
    </location>
</feature>
<feature type="compositionally biased region" description="Polar residues" evidence="2">
    <location>
        <begin position="453"/>
        <end position="467"/>
    </location>
</feature>
<feature type="compositionally biased region" description="Low complexity" evidence="2">
    <location>
        <begin position="564"/>
        <end position="592"/>
    </location>
</feature>
<feature type="compositionally biased region" description="Polar residues" evidence="2">
    <location>
        <begin position="607"/>
        <end position="624"/>
    </location>
</feature>
<feature type="compositionally biased region" description="Basic and acidic residues" evidence="2">
    <location>
        <begin position="629"/>
        <end position="638"/>
    </location>
</feature>
<feature type="compositionally biased region" description="Low complexity" evidence="2">
    <location>
        <begin position="644"/>
        <end position="661"/>
    </location>
</feature>
<feature type="compositionally biased region" description="Low complexity" evidence="2">
    <location>
        <begin position="691"/>
        <end position="701"/>
    </location>
</feature>
<feature type="compositionally biased region" description="Pro residues" evidence="2">
    <location>
        <begin position="702"/>
        <end position="715"/>
    </location>
</feature>
<keyword id="KW-0010">Activator</keyword>
<keyword id="KW-0539">Nucleus</keyword>
<keyword id="KW-1185">Reference proteome</keyword>
<keyword id="KW-0804">Transcription</keyword>
<keyword id="KW-0805">Transcription regulation</keyword>
<keyword id="KW-0843">Virulence</keyword>
<reference key="1">
    <citation type="journal article" date="2005" name="Nature">
        <title>Genomic sequence of the pathogenic and allergenic filamentous fungus Aspergillus fumigatus.</title>
        <authorList>
            <person name="Nierman W.C."/>
            <person name="Pain A."/>
            <person name="Anderson M.J."/>
            <person name="Wortman J.R."/>
            <person name="Kim H.S."/>
            <person name="Arroyo J."/>
            <person name="Berriman M."/>
            <person name="Abe K."/>
            <person name="Archer D.B."/>
            <person name="Bermejo C."/>
            <person name="Bennett J.W."/>
            <person name="Bowyer P."/>
            <person name="Chen D."/>
            <person name="Collins M."/>
            <person name="Coulsen R."/>
            <person name="Davies R."/>
            <person name="Dyer P.S."/>
            <person name="Farman M.L."/>
            <person name="Fedorova N."/>
            <person name="Fedorova N.D."/>
            <person name="Feldblyum T.V."/>
            <person name="Fischer R."/>
            <person name="Fosker N."/>
            <person name="Fraser A."/>
            <person name="Garcia J.L."/>
            <person name="Garcia M.J."/>
            <person name="Goble A."/>
            <person name="Goldman G.H."/>
            <person name="Gomi K."/>
            <person name="Griffith-Jones S."/>
            <person name="Gwilliam R."/>
            <person name="Haas B.J."/>
            <person name="Haas H."/>
            <person name="Harris D.E."/>
            <person name="Horiuchi H."/>
            <person name="Huang J."/>
            <person name="Humphray S."/>
            <person name="Jimenez J."/>
            <person name="Keller N."/>
            <person name="Khouri H."/>
            <person name="Kitamoto K."/>
            <person name="Kobayashi T."/>
            <person name="Konzack S."/>
            <person name="Kulkarni R."/>
            <person name="Kumagai T."/>
            <person name="Lafton A."/>
            <person name="Latge J.-P."/>
            <person name="Li W."/>
            <person name="Lord A."/>
            <person name="Lu C."/>
            <person name="Majoros W.H."/>
            <person name="May G.S."/>
            <person name="Miller B.L."/>
            <person name="Mohamoud Y."/>
            <person name="Molina M."/>
            <person name="Monod M."/>
            <person name="Mouyna I."/>
            <person name="Mulligan S."/>
            <person name="Murphy L.D."/>
            <person name="O'Neil S."/>
            <person name="Paulsen I."/>
            <person name="Penalva M.A."/>
            <person name="Pertea M."/>
            <person name="Price C."/>
            <person name="Pritchard B.L."/>
            <person name="Quail M.A."/>
            <person name="Rabbinowitsch E."/>
            <person name="Rawlins N."/>
            <person name="Rajandream M.A."/>
            <person name="Reichard U."/>
            <person name="Renauld H."/>
            <person name="Robson G.D."/>
            <person name="Rodriguez de Cordoba S."/>
            <person name="Rodriguez-Pena J.M."/>
            <person name="Ronning C.M."/>
            <person name="Rutter S."/>
            <person name="Salzberg S.L."/>
            <person name="Sanchez M."/>
            <person name="Sanchez-Ferrero J.C."/>
            <person name="Saunders D."/>
            <person name="Seeger K."/>
            <person name="Squares R."/>
            <person name="Squares S."/>
            <person name="Takeuchi M."/>
            <person name="Tekaia F."/>
            <person name="Turner G."/>
            <person name="Vazquez de Aldana C.R."/>
            <person name="Weidman J."/>
            <person name="White O."/>
            <person name="Woodward J.R."/>
            <person name="Yu J.-H."/>
            <person name="Fraser C.M."/>
            <person name="Galagan J.E."/>
            <person name="Asai K."/>
            <person name="Machida M."/>
            <person name="Hall N."/>
            <person name="Barrell B.G."/>
            <person name="Denning D.W."/>
        </authorList>
    </citation>
    <scope>NUCLEOTIDE SEQUENCE [LARGE SCALE GENOMIC DNA]</scope>
    <source>
        <strain>ATCC MYA-4609 / CBS 101355 / FGSC A1100 / Af293</strain>
    </source>
</reference>
<reference key="2">
    <citation type="journal article" date="2015" name="PLoS Pathog.">
        <title>Transcription factor somA is required for adhesion, development and virulence of the human pathogen Aspergillus fumigatus.</title>
        <authorList>
            <person name="Lin C.J."/>
            <person name="Sasse C."/>
            <person name="Gerke J."/>
            <person name="Valerius O."/>
            <person name="Irmer H."/>
            <person name="Frauendorf H."/>
            <person name="Heinekamp T."/>
            <person name="Strassburger M."/>
            <person name="Tran V.T."/>
            <person name="Herzog B."/>
            <person name="Braus-Stromeyer S.A."/>
            <person name="Braus G.H."/>
        </authorList>
    </citation>
    <scope>INTERACTION WITH PTAB</scope>
    <scope>DISRUPTION PHENOTYPE</scope>
    <scope>FUNCTION</scope>
</reference>
<evidence type="ECO:0000255" key="1">
    <source>
        <dbReference type="PROSITE-ProRule" id="PRU00126"/>
    </source>
</evidence>
<evidence type="ECO:0000256" key="2">
    <source>
        <dbReference type="SAM" id="MobiDB-lite"/>
    </source>
</evidence>
<evidence type="ECO:0000269" key="3">
    <source>
    </source>
</evidence>
<evidence type="ECO:0000303" key="4">
    <source>
    </source>
</evidence>
<evidence type="ECO:0000305" key="5"/>
<accession>Q4WAR8</accession>
<protein>
    <recommendedName>
        <fullName evidence="5">Transcriptional activator somA</fullName>
    </recommendedName>
</protein>
<sequence>MNQMNVTGMNPGAGGPVGGVPMMNNGSTAPRNDGNVNNIPETMINNLNTYIYDYFLKRGYHECARALVKDESIKLNTEPPTKTSPGHRREDMNGVEGDAIMTDSKDGDKIKIPDDLPRPNLASESQQSSFLLDWFSLFWDFFWAQRKKGNSNDVRQYLQHTQNMMRLREQQHNQLLRQQPVMPRQMGPLNMRRNGMVPANLQKTVLQNNTGGLSQQQIAQLQKNQQMHMMQQMQREHSDMDMNGHRPQSPSSAENAPSPSKRPRLENGPMNGQQLAPNGRGQGQAMPGQPNSQALLMQNGLNPRAMNPAQFAGFQQQGPAAQQKSIQVYAQNLALHHSRSALNNQGIPNGLMNPGVMPNQTDLVPMPDGQGMYPMNGDYYGTNGQMAQVRAGMQTPGGQHGNHALQDYQMQLMLLEQQNKRRLMMARQEQDSMSRADGQPPMPGQQGLPPGTSPQGSRAGTSPNPNEQMKRGTPKMPQTGLPGSPNAADAMGQNRGSPAAMNFNGGQMPPDMAGGQFFMKGMPDAMGGPNGMRPPSSNPAFSGPQMGQPIPAGAVNRVPSGNWQQQQGQPMGPQQSPAQQPQSTGTPQTQNSMPPPQAPPAGANAARTSPQSQNAAPPTPQQANKPAPKKREPKDTARKRTTKKQPAAAAAAANTAATPSSEAEHPPTTPTPSTPITPQHPSSFNKAGPNPTTSAPQQPTSAPAPQPIVQQPPPDQTQQSFNDLSIPDASAFNLDFSALENPDILENFDFDTFLNTDADTAGFGFDPNISYPTDGVETGAGDGL</sequence>
<proteinExistence type="evidence at protein level"/>
<name>SOMA_ASPFU</name>
<comment type="function">
    <text evidence="3">Transcription factor that controls the expression of genes related to the process of conidiation and adherence and regulates biofilm formation (PubMed:26529322). Controls conidiation and adhesion primarily by affecting the expression of the three regulatory genes flbB, stuA and medA (PubMed:26529322). Required for virulence in an egg and a mouse infection model (PubMed:26529322).</text>
</comment>
<comment type="subunit">
    <text evidence="3">Interacts with ptaB.</text>
</comment>
<comment type="subcellular location">
    <subcellularLocation>
        <location evidence="5">Nucleus</location>
    </subcellularLocation>
</comment>
<comment type="disruption phenotype">
    <text evidence="3">Impairs conidiophore formation.</text>
</comment>
<comment type="similarity">
    <text evidence="5">Belongs to the FLO8 family.</text>
</comment>
<gene>
    <name evidence="4" type="primary">somA</name>
    <name type="ORF">AFUA_7G02260</name>
</gene>